<keyword id="KW-0274">FAD</keyword>
<keyword id="KW-0285">Flavoprotein</keyword>
<keyword id="KW-0560">Oxidoreductase</keyword>
<sequence>MRVIVLGSGVIGVASAYYLARQGAEVTVLDRQSGPAEETSFGNAGQISPGYSTPWAAPGIPFKAVKWMFQHHAPLAINLDGSMWQLQWMAQMLKNCNPQSYAVNKERMMRVAEYSRDCLRELRKDTGIHYENRAKGTLQLFRKEAQMEAVQRDISVLEECGVSYELLNGNELGRVEPALANAQDKLVGGLHLPNDETGDCYLFTNALAQIAKELGVNFQFNQNVEKLIVEGDQIKGVQVNGKVLTADRYVLAFGSYSRDFLKPLDLQLPVYPVKGYSLTIPIVAPAFAPQSTVLDETYKIAITRFDQRIRVGGMAELSGFNLGLNEDRHATLQMVTQDLFPGGDMEQASFWTGLRPMTPDSTPIIGATRFKNLFLNTGHGTLGWTMACGSGKLISDIVLNHKTDISTDGLSIQRYSHAHAA</sequence>
<organism>
    <name type="scientific">Acinetobacter baumannii (strain SDF)</name>
    <dbReference type="NCBI Taxonomy" id="509170"/>
    <lineage>
        <taxon>Bacteria</taxon>
        <taxon>Pseudomonadati</taxon>
        <taxon>Pseudomonadota</taxon>
        <taxon>Gammaproteobacteria</taxon>
        <taxon>Moraxellales</taxon>
        <taxon>Moraxellaceae</taxon>
        <taxon>Acinetobacter</taxon>
        <taxon>Acinetobacter calcoaceticus/baumannii complex</taxon>
    </lineage>
</organism>
<accession>B0VNF5</accession>
<reference key="1">
    <citation type="journal article" date="2008" name="PLoS ONE">
        <title>Comparative analysis of Acinetobacters: three genomes for three lifestyles.</title>
        <authorList>
            <person name="Vallenet D."/>
            <person name="Nordmann P."/>
            <person name="Barbe V."/>
            <person name="Poirel L."/>
            <person name="Mangenot S."/>
            <person name="Bataille E."/>
            <person name="Dossat C."/>
            <person name="Gas S."/>
            <person name="Kreimeyer A."/>
            <person name="Lenoble P."/>
            <person name="Oztas S."/>
            <person name="Poulain J."/>
            <person name="Segurens B."/>
            <person name="Robert C."/>
            <person name="Abergel C."/>
            <person name="Claverie J.-M."/>
            <person name="Raoult D."/>
            <person name="Medigue C."/>
            <person name="Weissenbach J."/>
            <person name="Cruveiller S."/>
        </authorList>
    </citation>
    <scope>NUCLEOTIDE SEQUENCE [LARGE SCALE GENOMIC DNA]</scope>
    <source>
        <strain>SDF</strain>
    </source>
</reference>
<feature type="chain" id="PRO_1000138636" description="D-amino acid dehydrogenase">
    <location>
        <begin position="1"/>
        <end position="421"/>
    </location>
</feature>
<feature type="binding site" evidence="1">
    <location>
        <begin position="3"/>
        <end position="17"/>
    </location>
    <ligand>
        <name>FAD</name>
        <dbReference type="ChEBI" id="CHEBI:57692"/>
    </ligand>
</feature>
<dbReference type="EC" id="1.4.99.-" evidence="1"/>
<dbReference type="EMBL" id="CU468230">
    <property type="protein sequence ID" value="CAO99525.1"/>
    <property type="molecule type" value="Genomic_DNA"/>
</dbReference>
<dbReference type="SMR" id="B0VNF5"/>
<dbReference type="KEGG" id="abm:ABSDF0116"/>
<dbReference type="HOGENOM" id="CLU_007884_9_2_6"/>
<dbReference type="UniPathway" id="UPA00043">
    <property type="reaction ID" value="UER00498"/>
</dbReference>
<dbReference type="Proteomes" id="UP000001741">
    <property type="component" value="Chromosome"/>
</dbReference>
<dbReference type="GO" id="GO:0005737">
    <property type="term" value="C:cytoplasm"/>
    <property type="evidence" value="ECO:0007669"/>
    <property type="project" value="TreeGrafter"/>
</dbReference>
<dbReference type="GO" id="GO:0005886">
    <property type="term" value="C:plasma membrane"/>
    <property type="evidence" value="ECO:0007669"/>
    <property type="project" value="TreeGrafter"/>
</dbReference>
<dbReference type="GO" id="GO:0008718">
    <property type="term" value="F:D-amino-acid dehydrogenase activity"/>
    <property type="evidence" value="ECO:0007669"/>
    <property type="project" value="UniProtKB-UniRule"/>
</dbReference>
<dbReference type="GO" id="GO:0055130">
    <property type="term" value="P:D-alanine catabolic process"/>
    <property type="evidence" value="ECO:0007669"/>
    <property type="project" value="UniProtKB-UniPathway"/>
</dbReference>
<dbReference type="FunFam" id="3.50.50.60:FF:000020">
    <property type="entry name" value="D-amino acid dehydrogenase"/>
    <property type="match status" value="1"/>
</dbReference>
<dbReference type="Gene3D" id="3.30.9.10">
    <property type="entry name" value="D-Amino Acid Oxidase, subunit A, domain 2"/>
    <property type="match status" value="1"/>
</dbReference>
<dbReference type="Gene3D" id="3.50.50.60">
    <property type="entry name" value="FAD/NAD(P)-binding domain"/>
    <property type="match status" value="2"/>
</dbReference>
<dbReference type="HAMAP" id="MF_01202">
    <property type="entry name" value="DadA"/>
    <property type="match status" value="1"/>
</dbReference>
<dbReference type="InterPro" id="IPR023080">
    <property type="entry name" value="DadA"/>
</dbReference>
<dbReference type="InterPro" id="IPR006076">
    <property type="entry name" value="FAD-dep_OxRdtase"/>
</dbReference>
<dbReference type="InterPro" id="IPR036188">
    <property type="entry name" value="FAD/NAD-bd_sf"/>
</dbReference>
<dbReference type="NCBIfam" id="NF001933">
    <property type="entry name" value="PRK00711.1"/>
    <property type="match status" value="1"/>
</dbReference>
<dbReference type="PANTHER" id="PTHR13847:SF280">
    <property type="entry name" value="D-AMINO ACID DEHYDROGENASE"/>
    <property type="match status" value="1"/>
</dbReference>
<dbReference type="PANTHER" id="PTHR13847">
    <property type="entry name" value="SARCOSINE DEHYDROGENASE-RELATED"/>
    <property type="match status" value="1"/>
</dbReference>
<dbReference type="Pfam" id="PF01266">
    <property type="entry name" value="DAO"/>
    <property type="match status" value="1"/>
</dbReference>
<dbReference type="SUPFAM" id="SSF54373">
    <property type="entry name" value="FAD-linked reductases, C-terminal domain"/>
    <property type="match status" value="1"/>
</dbReference>
<dbReference type="SUPFAM" id="SSF51905">
    <property type="entry name" value="FAD/NAD(P)-binding domain"/>
    <property type="match status" value="1"/>
</dbReference>
<name>DADA_ACIBS</name>
<evidence type="ECO:0000255" key="1">
    <source>
        <dbReference type="HAMAP-Rule" id="MF_01202"/>
    </source>
</evidence>
<comment type="function">
    <text evidence="1">Oxidative deamination of D-amino acids.</text>
</comment>
<comment type="catalytic activity">
    <reaction evidence="1">
        <text>a D-alpha-amino acid + A + H2O = a 2-oxocarboxylate + AH2 + NH4(+)</text>
        <dbReference type="Rhea" id="RHEA:18125"/>
        <dbReference type="ChEBI" id="CHEBI:13193"/>
        <dbReference type="ChEBI" id="CHEBI:15377"/>
        <dbReference type="ChEBI" id="CHEBI:17499"/>
        <dbReference type="ChEBI" id="CHEBI:28938"/>
        <dbReference type="ChEBI" id="CHEBI:35179"/>
        <dbReference type="ChEBI" id="CHEBI:59871"/>
    </reaction>
</comment>
<comment type="cofactor">
    <cofactor evidence="1">
        <name>FAD</name>
        <dbReference type="ChEBI" id="CHEBI:57692"/>
    </cofactor>
</comment>
<comment type="pathway">
    <text>Amino-acid degradation; D-alanine degradation; NH(3) and pyruvate from D-alanine: step 1/1.</text>
</comment>
<comment type="similarity">
    <text evidence="1">Belongs to the DadA oxidoreductase family.</text>
</comment>
<gene>
    <name evidence="1" type="primary">dadA</name>
    <name type="ordered locus">ABSDF0116</name>
</gene>
<proteinExistence type="inferred from homology"/>
<protein>
    <recommendedName>
        <fullName evidence="1">D-amino acid dehydrogenase</fullName>
        <ecNumber evidence="1">1.4.99.-</ecNumber>
    </recommendedName>
</protein>